<proteinExistence type="inferred from homology"/>
<keyword id="KW-0167">Capsid protein</keyword>
<keyword id="KW-1152">Outer capsid protein</keyword>
<keyword id="KW-1162">Viral penetration into host cytoplasm</keyword>
<keyword id="KW-1173">Viral penetration via permeabilization of host membrane</keyword>
<keyword id="KW-0946">Virion</keyword>
<keyword id="KW-1160">Virus entry into host cell</keyword>
<evidence type="ECO:0000250" key="1"/>
<evidence type="ECO:0000305" key="2"/>
<accession>P25179</accession>
<sequence length="526" mass="59195">MGKIIKSLSRFGKKVGNALTSNTAKKIYNTIGKAAERFAESEIGSAAIDGLVQGSVHSIITGESYGESVKQAVLLNVLGAGDEIPDPLSPGERGIQTKIKEIEEEQRNELVRIKYGKEIREKFGEQLEEIYQFMNGEVKGEEEQEEQYKVLCKAVDSYENLLVTENEQMRTLARALQREATERTENESKMVKEYRQKIDALKVAIEVERDGMQEEAIQEIAGMTADVLEAASEEVPLVGSGMATAIATGRAIEGAYKLKKVINALSGIDLSHLRTPKIEPTMVATTLEHRFKEIPDKELAVSVLAKNDAIVANTKEIKHIKEEILPKFKKIMEEEKELEGIDDKKIHPRVMMRFKVPRSQQPQIHIYSAPWDSDDVFFFHCVSHFHANESFFLGFDLGIDVVHFEDLAAHWHALGAAQEAKGRTLNEAYREFLNLSIGSAFTSPMHARRMIRSKTVHPIYLGSMHYDITYETLKTNATEARYDEDLQMHILRGPLHFQRRAILGALKFGVKVLGDKVDVPLFLKNA</sequence>
<protein>
    <recommendedName>
        <fullName>Outer capsid protein VP5</fullName>
    </recommendedName>
</protein>
<gene>
    <name type="primary">Segment-6</name>
    <name type="synonym">M5</name>
</gene>
<name>VP5_BTV13</name>
<reference key="1">
    <citation type="journal article" date="1991" name="J. Gen. Virol.">
        <title>Sequence conservation of the outer capsid protein, VP5, of bluetongue virus, a contrasting feature to the outer capsid protein VP2.</title>
        <authorList>
            <person name="Oldfield S."/>
            <person name="Hirasawa T."/>
            <person name="Roy P."/>
        </authorList>
    </citation>
    <scope>NUCLEOTIDE SEQUENCE [GENOMIC RNA]</scope>
</reference>
<dbReference type="EMBL" id="X54308">
    <property type="protein sequence ID" value="CAA38205.1"/>
    <property type="molecule type" value="Genomic_RNA"/>
</dbReference>
<dbReference type="PIR" id="A38481">
    <property type="entry name" value="P5XRBT"/>
</dbReference>
<dbReference type="SMR" id="P25179"/>
<dbReference type="GO" id="GO:0039624">
    <property type="term" value="C:viral outer capsid"/>
    <property type="evidence" value="ECO:0007669"/>
    <property type="project" value="UniProtKB-KW"/>
</dbReference>
<dbReference type="GO" id="GO:0005198">
    <property type="term" value="F:structural molecule activity"/>
    <property type="evidence" value="ECO:0007669"/>
    <property type="project" value="InterPro"/>
</dbReference>
<dbReference type="GO" id="GO:0140267">
    <property type="term" value="P:symbiont entry into host cell via permeabilization of host membrane"/>
    <property type="evidence" value="ECO:0007669"/>
    <property type="project" value="UniProtKB-KW"/>
</dbReference>
<dbReference type="InterPro" id="IPR000145">
    <property type="entry name" value="Capsid_VP5_Orbivir"/>
</dbReference>
<dbReference type="Pfam" id="PF00901">
    <property type="entry name" value="Orbi_VP5"/>
    <property type="match status" value="1"/>
</dbReference>
<feature type="chain" id="PRO_0000222714" description="Outer capsid protein VP5">
    <location>
        <begin position="1"/>
        <end position="526"/>
    </location>
</feature>
<feature type="region of interest" description="Involved in membrane permeabilization" evidence="1">
    <location>
        <begin position="1"/>
        <end position="42"/>
    </location>
</feature>
<organism>
    <name type="scientific">Bluetongue virus 13 (isolate USA)</name>
    <name type="common">BTV 13</name>
    <dbReference type="NCBI Taxonomy" id="33717"/>
    <lineage>
        <taxon>Viruses</taxon>
        <taxon>Riboviria</taxon>
        <taxon>Orthornavirae</taxon>
        <taxon>Duplornaviricota</taxon>
        <taxon>Resentoviricetes</taxon>
        <taxon>Reovirales</taxon>
        <taxon>Sedoreoviridae</taxon>
        <taxon>Orbivirus</taxon>
        <taxon>Bluetongue virus</taxon>
    </lineage>
</organism>
<organismHost>
    <name type="scientific">Antilocapra americana</name>
    <name type="common">Pronghorn</name>
    <dbReference type="NCBI Taxonomy" id="9891"/>
</organismHost>
<organismHost>
    <name type="scientific">Bos taurus</name>
    <name type="common">Bovine</name>
    <dbReference type="NCBI Taxonomy" id="9913"/>
</organismHost>
<organismHost>
    <name type="scientific">Capra hircus</name>
    <name type="common">Goat</name>
    <dbReference type="NCBI Taxonomy" id="9925"/>
</organismHost>
<organismHost>
    <name type="scientific">Culicoides variipennis</name>
    <name type="common">Biting midge</name>
    <dbReference type="NCBI Taxonomy" id="46212"/>
</organismHost>
<organismHost>
    <name type="scientific">Ovis aries</name>
    <name type="common">Sheep</name>
    <dbReference type="NCBI Taxonomy" id="9940"/>
</organismHost>
<comment type="function">
    <text evidence="1">VP5 protein is one of the two proteins (with VP2) which constitute the virus particle outer capsid. Acts as a membrane permeabilization protein that mediates release of viral particles from endosomal compartments into the cytoplasm. Permeabilization activity is probably negatively regulated by VP2 and is triggered by endosomal degradation of VP2 and exposure to low pH (By similarity).</text>
</comment>
<comment type="subcellular location">
    <subcellularLocation>
        <location evidence="2">Virion</location>
    </subcellularLocation>
</comment>
<comment type="similarity">
    <text evidence="2">Belongs to the orbivirus VP5 family.</text>
</comment>